<accession>Q8ZY16</accession>
<reference key="1">
    <citation type="journal article" date="2002" name="Proc. Natl. Acad. Sci. U.S.A.">
        <title>Genome sequence of the hyperthermophilic crenarchaeon Pyrobaculum aerophilum.</title>
        <authorList>
            <person name="Fitz-Gibbon S.T."/>
            <person name="Ladner H."/>
            <person name="Kim U.-J."/>
            <person name="Stetter K.O."/>
            <person name="Simon M.I."/>
            <person name="Miller J.H."/>
        </authorList>
    </citation>
    <scope>NUCLEOTIDE SEQUENCE [LARGE SCALE GENOMIC DNA]</scope>
    <source>
        <strain>ATCC 51768 / DSM 7523 / JCM 9630 / CIP 104966 / NBRC 100827 / IM2</strain>
    </source>
</reference>
<reference key="2">
    <citation type="journal article" date="2001" name="Acta Crystallogr. D">
        <title>Structure of HisF, a histidine biosynthetic protein from Pyrobaculum aerophilum.</title>
        <authorList>
            <person name="Banfield M.J."/>
            <person name="Lott J.S."/>
            <person name="Arcus V.L."/>
            <person name="McCarthy A.A."/>
            <person name="Baker E.N."/>
        </authorList>
    </citation>
    <scope>X-RAY CRYSTALLOGRAPHY (2.0 ANGSTROMS)</scope>
</reference>
<comment type="function">
    <text>IGPS catalyzes the conversion of PRFAR and glutamine to IGP, AICAR and glutamate. The HisF subunit catalyzes the cyclization activity that produces IGP and AICAR from PRFAR using the ammonia provided by the HisH subunit.</text>
</comment>
<comment type="catalytic activity">
    <reaction>
        <text>5-[(5-phospho-1-deoxy-D-ribulos-1-ylimino)methylamino]-1-(5-phospho-beta-D-ribosyl)imidazole-4-carboxamide + L-glutamine = D-erythro-1-(imidazol-4-yl)glycerol 3-phosphate + 5-amino-1-(5-phospho-beta-D-ribosyl)imidazole-4-carboxamide + L-glutamate + H(+)</text>
        <dbReference type="Rhea" id="RHEA:24793"/>
        <dbReference type="ChEBI" id="CHEBI:15378"/>
        <dbReference type="ChEBI" id="CHEBI:29985"/>
        <dbReference type="ChEBI" id="CHEBI:58278"/>
        <dbReference type="ChEBI" id="CHEBI:58359"/>
        <dbReference type="ChEBI" id="CHEBI:58475"/>
        <dbReference type="ChEBI" id="CHEBI:58525"/>
        <dbReference type="EC" id="4.3.2.10"/>
    </reaction>
</comment>
<comment type="pathway">
    <text>Amino-acid biosynthesis; L-histidine biosynthesis; L-histidine from 5-phospho-alpha-D-ribose 1-diphosphate: step 5/9.</text>
</comment>
<comment type="subunit">
    <text evidence="1">Heterodimer of HisH and HisF.</text>
</comment>
<comment type="subcellular location">
    <subcellularLocation>
        <location evidence="1">Cytoplasm</location>
    </subcellularLocation>
</comment>
<comment type="similarity">
    <text evidence="3">Belongs to the HisA/HisF family.</text>
</comment>
<evidence type="ECO:0000250" key="1"/>
<evidence type="ECO:0000255" key="2"/>
<evidence type="ECO:0000305" key="3"/>
<evidence type="ECO:0007829" key="4">
    <source>
        <dbReference type="PDB" id="1H5Y"/>
    </source>
</evidence>
<gene>
    <name type="primary">hisF</name>
    <name type="ordered locus">PAE0989</name>
</gene>
<organism>
    <name type="scientific">Pyrobaculum aerophilum (strain ATCC 51768 / DSM 7523 / JCM 9630 / CIP 104966 / NBRC 100827 / IM2)</name>
    <dbReference type="NCBI Taxonomy" id="178306"/>
    <lineage>
        <taxon>Archaea</taxon>
        <taxon>Thermoproteota</taxon>
        <taxon>Thermoprotei</taxon>
        <taxon>Thermoproteales</taxon>
        <taxon>Thermoproteaceae</taxon>
        <taxon>Pyrobaculum</taxon>
    </lineage>
</organism>
<name>HIS6_PYRAE</name>
<dbReference type="EC" id="4.3.2.10"/>
<dbReference type="EMBL" id="AE009441">
    <property type="protein sequence ID" value="AAL63180.1"/>
    <property type="molecule type" value="Genomic_DNA"/>
</dbReference>
<dbReference type="RefSeq" id="WP_011007652.1">
    <property type="nucleotide sequence ID" value="NC_003364.1"/>
</dbReference>
<dbReference type="PDB" id="1H5Y">
    <property type="method" value="X-ray"/>
    <property type="resolution" value="2.00 A"/>
    <property type="chains" value="A/B=4-253"/>
</dbReference>
<dbReference type="PDBsum" id="1H5Y"/>
<dbReference type="SMR" id="Q8ZY16"/>
<dbReference type="FunCoup" id="Q8ZY16">
    <property type="interactions" value="197"/>
</dbReference>
<dbReference type="STRING" id="178306.PAE0989"/>
<dbReference type="EnsemblBacteria" id="AAL63180">
    <property type="protein sequence ID" value="AAL63180"/>
    <property type="gene ID" value="PAE0989"/>
</dbReference>
<dbReference type="GeneID" id="1465415"/>
<dbReference type="KEGG" id="pai:PAE0989"/>
<dbReference type="PATRIC" id="fig|178306.9.peg.735"/>
<dbReference type="eggNOG" id="arCOG00617">
    <property type="taxonomic scope" value="Archaea"/>
</dbReference>
<dbReference type="HOGENOM" id="CLU_048577_4_0_2"/>
<dbReference type="InParanoid" id="Q8ZY16"/>
<dbReference type="BRENDA" id="4.3.2.10">
    <property type="organism ID" value="5239"/>
</dbReference>
<dbReference type="UniPathway" id="UPA00031">
    <property type="reaction ID" value="UER00010"/>
</dbReference>
<dbReference type="EvolutionaryTrace" id="Q8ZY16"/>
<dbReference type="Proteomes" id="UP000002439">
    <property type="component" value="Chromosome"/>
</dbReference>
<dbReference type="GO" id="GO:0005737">
    <property type="term" value="C:cytoplasm"/>
    <property type="evidence" value="ECO:0007669"/>
    <property type="project" value="UniProtKB-SubCell"/>
</dbReference>
<dbReference type="GO" id="GO:0000107">
    <property type="term" value="F:imidazoleglycerol-phosphate synthase activity"/>
    <property type="evidence" value="ECO:0000318"/>
    <property type="project" value="GO_Central"/>
</dbReference>
<dbReference type="GO" id="GO:0016829">
    <property type="term" value="F:lyase activity"/>
    <property type="evidence" value="ECO:0007669"/>
    <property type="project" value="UniProtKB-KW"/>
</dbReference>
<dbReference type="GO" id="GO:0000105">
    <property type="term" value="P:L-histidine biosynthetic process"/>
    <property type="evidence" value="ECO:0007669"/>
    <property type="project" value="UniProtKB-UniRule"/>
</dbReference>
<dbReference type="CDD" id="cd04731">
    <property type="entry name" value="HisF"/>
    <property type="match status" value="1"/>
</dbReference>
<dbReference type="FunFam" id="3.20.20.70:FF:000006">
    <property type="entry name" value="Imidazole glycerol phosphate synthase subunit HisF"/>
    <property type="match status" value="1"/>
</dbReference>
<dbReference type="Gene3D" id="3.20.20.70">
    <property type="entry name" value="Aldolase class I"/>
    <property type="match status" value="1"/>
</dbReference>
<dbReference type="HAMAP" id="MF_01013">
    <property type="entry name" value="HisF"/>
    <property type="match status" value="1"/>
</dbReference>
<dbReference type="InterPro" id="IPR013785">
    <property type="entry name" value="Aldolase_TIM"/>
</dbReference>
<dbReference type="InterPro" id="IPR006062">
    <property type="entry name" value="His_biosynth"/>
</dbReference>
<dbReference type="InterPro" id="IPR004651">
    <property type="entry name" value="HisF"/>
</dbReference>
<dbReference type="InterPro" id="IPR050064">
    <property type="entry name" value="IGPS_HisA/HisF"/>
</dbReference>
<dbReference type="InterPro" id="IPR011060">
    <property type="entry name" value="RibuloseP-bd_barrel"/>
</dbReference>
<dbReference type="NCBIfam" id="TIGR00735">
    <property type="entry name" value="hisF"/>
    <property type="match status" value="1"/>
</dbReference>
<dbReference type="PANTHER" id="PTHR21235:SF2">
    <property type="entry name" value="IMIDAZOLE GLYCEROL PHOSPHATE SYNTHASE HISHF"/>
    <property type="match status" value="1"/>
</dbReference>
<dbReference type="PANTHER" id="PTHR21235">
    <property type="entry name" value="IMIDAZOLE GLYCEROL PHOSPHATE SYNTHASE SUBUNIT HISF/H IGP SYNTHASE SUBUNIT HISF/H"/>
    <property type="match status" value="1"/>
</dbReference>
<dbReference type="Pfam" id="PF00977">
    <property type="entry name" value="His_biosynth"/>
    <property type="match status" value="1"/>
</dbReference>
<dbReference type="SUPFAM" id="SSF51366">
    <property type="entry name" value="Ribulose-phoshate binding barrel"/>
    <property type="match status" value="1"/>
</dbReference>
<feature type="chain" id="PRO_0000142286" description="Imidazole glycerol phosphate synthase subunit HisF">
    <location>
        <begin position="1"/>
        <end position="253"/>
    </location>
</feature>
<feature type="active site" evidence="2">
    <location>
        <position position="12"/>
    </location>
</feature>
<feature type="active site" evidence="2">
    <location>
        <position position="133"/>
    </location>
</feature>
<feature type="strand" evidence="4">
    <location>
        <begin position="6"/>
        <end position="13"/>
    </location>
</feature>
<feature type="helix" evidence="4">
    <location>
        <begin position="15"/>
        <end position="17"/>
    </location>
</feature>
<feature type="helix" evidence="4">
    <location>
        <begin position="27"/>
        <end position="30"/>
    </location>
</feature>
<feature type="strand" evidence="4">
    <location>
        <begin position="31"/>
        <end position="33"/>
    </location>
</feature>
<feature type="helix" evidence="4">
    <location>
        <begin position="35"/>
        <end position="44"/>
    </location>
</feature>
<feature type="strand" evidence="4">
    <location>
        <begin position="50"/>
        <end position="54"/>
    </location>
</feature>
<feature type="turn" evidence="4">
    <location>
        <begin position="59"/>
        <end position="61"/>
    </location>
</feature>
<feature type="helix" evidence="4">
    <location>
        <begin position="62"/>
        <end position="75"/>
    </location>
</feature>
<feature type="strand" evidence="4">
    <location>
        <begin position="80"/>
        <end position="85"/>
    </location>
</feature>
<feature type="helix" evidence="4">
    <location>
        <begin position="89"/>
        <end position="98"/>
    </location>
</feature>
<feature type="strand" evidence="4">
    <location>
        <begin position="101"/>
        <end position="106"/>
    </location>
</feature>
<feature type="helix" evidence="4">
    <location>
        <begin position="107"/>
        <end position="111"/>
    </location>
</feature>
<feature type="helix" evidence="4">
    <location>
        <begin position="114"/>
        <end position="123"/>
    </location>
</feature>
<feature type="helix" evidence="4">
    <location>
        <begin position="125"/>
        <end position="127"/>
    </location>
</feature>
<feature type="strand" evidence="4">
    <location>
        <begin position="128"/>
        <end position="136"/>
    </location>
</feature>
<feature type="strand" evidence="4">
    <location>
        <begin position="138"/>
        <end position="145"/>
    </location>
</feature>
<feature type="turn" evidence="4">
    <location>
        <begin position="146"/>
        <end position="149"/>
    </location>
</feature>
<feature type="strand" evidence="4">
    <location>
        <begin position="150"/>
        <end position="155"/>
    </location>
</feature>
<feature type="helix" evidence="4">
    <location>
        <begin position="156"/>
        <end position="166"/>
    </location>
</feature>
<feature type="strand" evidence="4">
    <location>
        <begin position="169"/>
        <end position="175"/>
    </location>
</feature>
<feature type="turn" evidence="4">
    <location>
        <begin position="176"/>
        <end position="181"/>
    </location>
</feature>
<feature type="helix" evidence="4">
    <location>
        <begin position="187"/>
        <end position="196"/>
    </location>
</feature>
<feature type="strand" evidence="4">
    <location>
        <begin position="201"/>
        <end position="205"/>
    </location>
</feature>
<feature type="helix" evidence="4">
    <location>
        <begin position="210"/>
        <end position="218"/>
    </location>
</feature>
<feature type="strand" evidence="4">
    <location>
        <begin position="222"/>
        <end position="227"/>
    </location>
</feature>
<feature type="helix" evidence="4">
    <location>
        <begin position="228"/>
        <end position="231"/>
    </location>
</feature>
<feature type="helix" evidence="4">
    <location>
        <begin position="237"/>
        <end position="246"/>
    </location>
</feature>
<keyword id="KW-0002">3D-structure</keyword>
<keyword id="KW-0028">Amino-acid biosynthesis</keyword>
<keyword id="KW-0963">Cytoplasm</keyword>
<keyword id="KW-0368">Histidine biosynthesis</keyword>
<keyword id="KW-0456">Lyase</keyword>
<keyword id="KW-1185">Reference proteome</keyword>
<protein>
    <recommendedName>
        <fullName>Imidazole glycerol phosphate synthase subunit HisF</fullName>
        <ecNumber>4.3.2.10</ecNumber>
    </recommendedName>
    <alternativeName>
        <fullName>IGP synthase cyclase subunit</fullName>
    </alternativeName>
    <alternativeName>
        <fullName>IGP synthase subunit HisF</fullName>
    </alternativeName>
    <alternativeName>
        <fullName>ImGP synthase subunit HisF</fullName>
        <shortName>IGPS subunit HisF</shortName>
    </alternativeName>
</protein>
<proteinExistence type="evidence at protein level"/>
<sequence length="253" mass="26969">MDVALRIIPCLDIDGKAGVVVKGVNFQGIREVGDPVEMAVRYEEEGADEIAILDITAAPEGRATFIDSVKRVAEAVSIPVLVGGGVRSLEDATTLFRAGADKVSVNTAAVRNPQLVALLAREFGSQSTVVAIDAKWNGEYYEVYVKGGREATGLDAVKWAKEVEELGAGEILLTSIDRDGTGLGYDVELIRRVADSVRIPVIASGGAGRVEHFYEAAAAGADAVLAASLFHFRVLSIAQVKRYLKERGVEVRI</sequence>